<keyword id="KW-0963">Cytoplasm</keyword>
<keyword id="KW-0521">NADP</keyword>
<keyword id="KW-0560">Oxidoreductase</keyword>
<keyword id="KW-0566">Pantothenate biosynthesis</keyword>
<keyword id="KW-1185">Reference proteome</keyword>
<organism>
    <name type="scientific">Streptococcus pyogenes serotype M1</name>
    <dbReference type="NCBI Taxonomy" id="301447"/>
    <lineage>
        <taxon>Bacteria</taxon>
        <taxon>Bacillati</taxon>
        <taxon>Bacillota</taxon>
        <taxon>Bacilli</taxon>
        <taxon>Lactobacillales</taxon>
        <taxon>Streptococcaceae</taxon>
        <taxon>Streptococcus</taxon>
    </lineage>
</organism>
<name>PANE_STRP1</name>
<protein>
    <recommendedName>
        <fullName evidence="1">2-dehydropantoate 2-reductase</fullName>
        <ecNumber evidence="1">1.1.1.169</ecNumber>
    </recommendedName>
    <alternativeName>
        <fullName evidence="1">Ketopantoate reductase</fullName>
        <shortName evidence="1">KPR</shortName>
    </alternativeName>
</protein>
<gene>
    <name type="primary">apbA</name>
    <name type="ordered locus">SPy_0852</name>
    <name type="ordered locus">M5005_Spy0659</name>
</gene>
<dbReference type="EC" id="1.1.1.169" evidence="1"/>
<dbReference type="EMBL" id="AE004092">
    <property type="protein sequence ID" value="AAK33780.1"/>
    <property type="molecule type" value="Genomic_DNA"/>
</dbReference>
<dbReference type="EMBL" id="CP000017">
    <property type="protein sequence ID" value="AAZ51277.1"/>
    <property type="molecule type" value="Genomic_DNA"/>
</dbReference>
<dbReference type="RefSeq" id="NP_269059.1">
    <property type="nucleotide sequence ID" value="NC_002737.2"/>
</dbReference>
<dbReference type="SMR" id="P65666"/>
<dbReference type="PaxDb" id="1314-HKU360_00672"/>
<dbReference type="KEGG" id="spy:SPy_0852"/>
<dbReference type="KEGG" id="spz:M5005_Spy0659"/>
<dbReference type="PATRIC" id="fig|160490.10.peg.729"/>
<dbReference type="HOGENOM" id="CLU_031468_0_0_9"/>
<dbReference type="OMA" id="ANYSSMY"/>
<dbReference type="UniPathway" id="UPA00028">
    <property type="reaction ID" value="UER00004"/>
</dbReference>
<dbReference type="Proteomes" id="UP000000750">
    <property type="component" value="Chromosome"/>
</dbReference>
<dbReference type="GO" id="GO:0005737">
    <property type="term" value="C:cytoplasm"/>
    <property type="evidence" value="ECO:0007669"/>
    <property type="project" value="UniProtKB-SubCell"/>
</dbReference>
<dbReference type="GO" id="GO:0008677">
    <property type="term" value="F:2-dehydropantoate 2-reductase activity"/>
    <property type="evidence" value="ECO:0007669"/>
    <property type="project" value="UniProtKB-EC"/>
</dbReference>
<dbReference type="GO" id="GO:0050661">
    <property type="term" value="F:NADP binding"/>
    <property type="evidence" value="ECO:0007669"/>
    <property type="project" value="TreeGrafter"/>
</dbReference>
<dbReference type="GO" id="GO:0015940">
    <property type="term" value="P:pantothenate biosynthetic process"/>
    <property type="evidence" value="ECO:0007669"/>
    <property type="project" value="UniProtKB-UniPathway"/>
</dbReference>
<dbReference type="Gene3D" id="1.10.1040.10">
    <property type="entry name" value="N-(1-d-carboxylethyl)-l-norvaline Dehydrogenase, domain 2"/>
    <property type="match status" value="1"/>
</dbReference>
<dbReference type="Gene3D" id="3.40.50.720">
    <property type="entry name" value="NAD(P)-binding Rossmann-like Domain"/>
    <property type="match status" value="1"/>
</dbReference>
<dbReference type="InterPro" id="IPR008927">
    <property type="entry name" value="6-PGluconate_DH-like_C_sf"/>
</dbReference>
<dbReference type="InterPro" id="IPR013328">
    <property type="entry name" value="6PGD_dom2"/>
</dbReference>
<dbReference type="InterPro" id="IPR003710">
    <property type="entry name" value="ApbA"/>
</dbReference>
<dbReference type="InterPro" id="IPR050838">
    <property type="entry name" value="Ketopantoate_reductase"/>
</dbReference>
<dbReference type="InterPro" id="IPR013752">
    <property type="entry name" value="KPA_reductase"/>
</dbReference>
<dbReference type="InterPro" id="IPR013332">
    <property type="entry name" value="KPR_N"/>
</dbReference>
<dbReference type="InterPro" id="IPR036291">
    <property type="entry name" value="NAD(P)-bd_dom_sf"/>
</dbReference>
<dbReference type="NCBIfam" id="TIGR00745">
    <property type="entry name" value="apbA_panE"/>
    <property type="match status" value="1"/>
</dbReference>
<dbReference type="NCBIfam" id="NF005088">
    <property type="entry name" value="PRK06522.1-2"/>
    <property type="match status" value="1"/>
</dbReference>
<dbReference type="PANTHER" id="PTHR43765:SF2">
    <property type="entry name" value="2-DEHYDROPANTOATE 2-REDUCTASE"/>
    <property type="match status" value="1"/>
</dbReference>
<dbReference type="PANTHER" id="PTHR43765">
    <property type="entry name" value="2-DEHYDROPANTOATE 2-REDUCTASE-RELATED"/>
    <property type="match status" value="1"/>
</dbReference>
<dbReference type="Pfam" id="PF02558">
    <property type="entry name" value="ApbA"/>
    <property type="match status" value="1"/>
</dbReference>
<dbReference type="Pfam" id="PF08546">
    <property type="entry name" value="ApbA_C"/>
    <property type="match status" value="1"/>
</dbReference>
<dbReference type="SUPFAM" id="SSF48179">
    <property type="entry name" value="6-phosphogluconate dehydrogenase C-terminal domain-like"/>
    <property type="match status" value="1"/>
</dbReference>
<dbReference type="SUPFAM" id="SSF51735">
    <property type="entry name" value="NAD(P)-binding Rossmann-fold domains"/>
    <property type="match status" value="1"/>
</dbReference>
<comment type="function">
    <text evidence="1">Catalyzes the NADPH-dependent reduction of ketopantoate into pantoic acid.</text>
</comment>
<comment type="catalytic activity">
    <reaction evidence="1">
        <text>(R)-pantoate + NADP(+) = 2-dehydropantoate + NADPH + H(+)</text>
        <dbReference type="Rhea" id="RHEA:16233"/>
        <dbReference type="ChEBI" id="CHEBI:11561"/>
        <dbReference type="ChEBI" id="CHEBI:15378"/>
        <dbReference type="ChEBI" id="CHEBI:15980"/>
        <dbReference type="ChEBI" id="CHEBI:57783"/>
        <dbReference type="ChEBI" id="CHEBI:58349"/>
        <dbReference type="EC" id="1.1.1.169"/>
    </reaction>
</comment>
<comment type="pathway">
    <text evidence="1">Cofactor biosynthesis; (R)-pantothenate biosynthesis; (R)-pantoate from 3-methyl-2-oxobutanoate: step 2/2.</text>
</comment>
<comment type="subcellular location">
    <subcellularLocation>
        <location evidence="1">Cytoplasm</location>
    </subcellularLocation>
</comment>
<comment type="similarity">
    <text evidence="2">Belongs to the ketopantoate reductase family.</text>
</comment>
<feature type="chain" id="PRO_0000157318" description="2-dehydropantoate 2-reductase">
    <location>
        <begin position="1"/>
        <end position="307"/>
    </location>
</feature>
<feature type="active site" description="Proton donor" evidence="1">
    <location>
        <position position="184"/>
    </location>
</feature>
<feature type="binding site" evidence="1">
    <location>
        <begin position="7"/>
        <end position="12"/>
    </location>
    <ligand>
        <name>NADP(+)</name>
        <dbReference type="ChEBI" id="CHEBI:58349"/>
    </ligand>
</feature>
<feature type="binding site" evidence="1">
    <location>
        <position position="102"/>
    </location>
    <ligand>
        <name>NADP(+)</name>
        <dbReference type="ChEBI" id="CHEBI:58349"/>
    </ligand>
</feature>
<feature type="binding site" evidence="1">
    <location>
        <position position="102"/>
    </location>
    <ligand>
        <name>substrate</name>
    </ligand>
</feature>
<feature type="binding site" evidence="1">
    <location>
        <position position="128"/>
    </location>
    <ligand>
        <name>NADP(+)</name>
        <dbReference type="ChEBI" id="CHEBI:58349"/>
    </ligand>
</feature>
<feature type="binding site" evidence="1">
    <location>
        <position position="188"/>
    </location>
    <ligand>
        <name>substrate</name>
    </ligand>
</feature>
<feature type="binding site" evidence="1">
    <location>
        <position position="192"/>
    </location>
    <ligand>
        <name>substrate</name>
    </ligand>
</feature>
<feature type="binding site" evidence="1">
    <location>
        <position position="255"/>
    </location>
    <ligand>
        <name>substrate</name>
    </ligand>
</feature>
<feature type="binding site" evidence="1">
    <location>
        <position position="268"/>
    </location>
    <ligand>
        <name>NADP(+)</name>
        <dbReference type="ChEBI" id="CHEBI:58349"/>
    </ligand>
</feature>
<evidence type="ECO:0000250" key="1">
    <source>
        <dbReference type="UniProtKB" id="P0A9J4"/>
    </source>
</evidence>
<evidence type="ECO:0000305" key="2"/>
<reference key="1">
    <citation type="journal article" date="2001" name="Proc. Natl. Acad. Sci. U.S.A.">
        <title>Complete genome sequence of an M1 strain of Streptococcus pyogenes.</title>
        <authorList>
            <person name="Ferretti J.J."/>
            <person name="McShan W.M."/>
            <person name="Ajdic D.J."/>
            <person name="Savic D.J."/>
            <person name="Savic G."/>
            <person name="Lyon K."/>
            <person name="Primeaux C."/>
            <person name="Sezate S."/>
            <person name="Suvorov A.N."/>
            <person name="Kenton S."/>
            <person name="Lai H.S."/>
            <person name="Lin S.P."/>
            <person name="Qian Y."/>
            <person name="Jia H.G."/>
            <person name="Najar F.Z."/>
            <person name="Ren Q."/>
            <person name="Zhu H."/>
            <person name="Song L."/>
            <person name="White J."/>
            <person name="Yuan X."/>
            <person name="Clifton S.W."/>
            <person name="Roe B.A."/>
            <person name="McLaughlin R.E."/>
        </authorList>
    </citation>
    <scope>NUCLEOTIDE SEQUENCE [LARGE SCALE GENOMIC DNA]</scope>
    <source>
        <strain>ATCC 700294 / SF370 / Serotype M1</strain>
    </source>
</reference>
<reference key="2">
    <citation type="journal article" date="2005" name="J. Infect. Dis.">
        <title>Evolutionary origin and emergence of a highly successful clone of serotype M1 group A Streptococcus involved multiple horizontal gene transfer events.</title>
        <authorList>
            <person name="Sumby P."/>
            <person name="Porcella S.F."/>
            <person name="Madrigal A.G."/>
            <person name="Barbian K.D."/>
            <person name="Virtaneva K."/>
            <person name="Ricklefs S.M."/>
            <person name="Sturdevant D.E."/>
            <person name="Graham M.R."/>
            <person name="Vuopio-Varkila J."/>
            <person name="Hoe N.P."/>
            <person name="Musser J.M."/>
        </authorList>
    </citation>
    <scope>NUCLEOTIDE SEQUENCE [LARGE SCALE GENOMIC DNA]</scope>
    <source>
        <strain>ATCC BAA-947 / MGAS5005 / Serotype M1</strain>
    </source>
</reference>
<sequence length="307" mass="33829">MLVYIAGSGAMGCRFGYQISKTNNDVILLDNWEDHINAIKENGLVVTGDVEETVKLPIMKPTEATQEADLIILFTKAMQLPQMLQDIKGIIGKETKVLCLLNGLGHEDVIRQYIPEHNILMGVTVWTAGLEGPGRAHLQGVGALNLQSMDPSNQEAGHQVADLLNEANLNATYDENVVPNIWRKACVNGTMNSTCALLDCTIGELFASEDGLKMVKEIIHEFVIVGQAEGVELNEEEITQYVMDTSVKAAHHYPSMHQDLVQNHRLTEIDFINGAVNTKGEKLGINTPYCRMITELVHAKEAVLNIQ</sequence>
<proteinExistence type="inferred from homology"/>
<accession>P65666</accession>
<accession>Q48ZE1</accession>
<accession>Q9A0B3</accession>